<comment type="function">
    <text evidence="1">One of two assembly initiator proteins, it binds directly to the 5'-end of the 23S rRNA, where it nucleates assembly of the 50S subunit.</text>
</comment>
<comment type="function">
    <text evidence="1">One of the proteins that surrounds the polypeptide exit tunnel on the outside of the subunit.</text>
</comment>
<comment type="subunit">
    <text evidence="1">Part of the 50S ribosomal subunit.</text>
</comment>
<comment type="similarity">
    <text evidence="1">Belongs to the universal ribosomal protein uL24 family.</text>
</comment>
<proteinExistence type="inferred from homology"/>
<feature type="chain" id="PRO_1000141993" description="Large ribosomal subunit protein uL24">
    <location>
        <begin position="1"/>
        <end position="104"/>
    </location>
</feature>
<evidence type="ECO:0000255" key="1">
    <source>
        <dbReference type="HAMAP-Rule" id="MF_01326"/>
    </source>
</evidence>
<evidence type="ECO:0000305" key="2"/>
<gene>
    <name evidence="1" type="primary">rplX</name>
    <name type="ordered locus">ECDH10B_3484</name>
</gene>
<organism>
    <name type="scientific">Escherichia coli (strain K12 / DH10B)</name>
    <dbReference type="NCBI Taxonomy" id="316385"/>
    <lineage>
        <taxon>Bacteria</taxon>
        <taxon>Pseudomonadati</taxon>
        <taxon>Pseudomonadota</taxon>
        <taxon>Gammaproteobacteria</taxon>
        <taxon>Enterobacterales</taxon>
        <taxon>Enterobacteriaceae</taxon>
        <taxon>Escherichia</taxon>
    </lineage>
</organism>
<reference key="1">
    <citation type="journal article" date="2008" name="J. Bacteriol.">
        <title>The complete genome sequence of Escherichia coli DH10B: insights into the biology of a laboratory workhorse.</title>
        <authorList>
            <person name="Durfee T."/>
            <person name="Nelson R."/>
            <person name="Baldwin S."/>
            <person name="Plunkett G. III"/>
            <person name="Burland V."/>
            <person name="Mau B."/>
            <person name="Petrosino J.F."/>
            <person name="Qin X."/>
            <person name="Muzny D.M."/>
            <person name="Ayele M."/>
            <person name="Gibbs R.A."/>
            <person name="Csorgo B."/>
            <person name="Posfai G."/>
            <person name="Weinstock G.M."/>
            <person name="Blattner F.R."/>
        </authorList>
    </citation>
    <scope>NUCLEOTIDE SEQUENCE [LARGE SCALE GENOMIC DNA]</scope>
    <source>
        <strain>K12 / DH10B</strain>
    </source>
</reference>
<dbReference type="EMBL" id="CP000948">
    <property type="protein sequence ID" value="ACB04371.1"/>
    <property type="molecule type" value="Genomic_DNA"/>
</dbReference>
<dbReference type="RefSeq" id="WP_000729185.1">
    <property type="nucleotide sequence ID" value="NC_010473.1"/>
</dbReference>
<dbReference type="SMR" id="B1X6G1"/>
<dbReference type="GeneID" id="93778678"/>
<dbReference type="KEGG" id="ecd:ECDH10B_3484"/>
<dbReference type="HOGENOM" id="CLU_093315_2_2_6"/>
<dbReference type="GO" id="GO:0005829">
    <property type="term" value="C:cytosol"/>
    <property type="evidence" value="ECO:0007669"/>
    <property type="project" value="UniProtKB-ARBA"/>
</dbReference>
<dbReference type="GO" id="GO:1990904">
    <property type="term" value="C:ribonucleoprotein complex"/>
    <property type="evidence" value="ECO:0007669"/>
    <property type="project" value="UniProtKB-KW"/>
</dbReference>
<dbReference type="GO" id="GO:0005840">
    <property type="term" value="C:ribosome"/>
    <property type="evidence" value="ECO:0007669"/>
    <property type="project" value="UniProtKB-KW"/>
</dbReference>
<dbReference type="GO" id="GO:0019843">
    <property type="term" value="F:rRNA binding"/>
    <property type="evidence" value="ECO:0007669"/>
    <property type="project" value="UniProtKB-UniRule"/>
</dbReference>
<dbReference type="GO" id="GO:0003735">
    <property type="term" value="F:structural constituent of ribosome"/>
    <property type="evidence" value="ECO:0007669"/>
    <property type="project" value="InterPro"/>
</dbReference>
<dbReference type="GO" id="GO:0006412">
    <property type="term" value="P:translation"/>
    <property type="evidence" value="ECO:0007669"/>
    <property type="project" value="UniProtKB-UniRule"/>
</dbReference>
<dbReference type="CDD" id="cd06089">
    <property type="entry name" value="KOW_RPL26"/>
    <property type="match status" value="1"/>
</dbReference>
<dbReference type="FunFam" id="2.30.30.30:FF:000004">
    <property type="entry name" value="50S ribosomal protein L24"/>
    <property type="match status" value="1"/>
</dbReference>
<dbReference type="Gene3D" id="2.30.30.30">
    <property type="match status" value="1"/>
</dbReference>
<dbReference type="HAMAP" id="MF_01326_B">
    <property type="entry name" value="Ribosomal_uL24_B"/>
    <property type="match status" value="1"/>
</dbReference>
<dbReference type="InterPro" id="IPR005824">
    <property type="entry name" value="KOW"/>
</dbReference>
<dbReference type="InterPro" id="IPR014722">
    <property type="entry name" value="Rib_uL2_dom2"/>
</dbReference>
<dbReference type="InterPro" id="IPR003256">
    <property type="entry name" value="Ribosomal_uL24"/>
</dbReference>
<dbReference type="InterPro" id="IPR005825">
    <property type="entry name" value="Ribosomal_uL24_CS"/>
</dbReference>
<dbReference type="InterPro" id="IPR041988">
    <property type="entry name" value="Ribosomal_uL24_KOW"/>
</dbReference>
<dbReference type="InterPro" id="IPR008991">
    <property type="entry name" value="Translation_prot_SH3-like_sf"/>
</dbReference>
<dbReference type="NCBIfam" id="TIGR01079">
    <property type="entry name" value="rplX_bact"/>
    <property type="match status" value="1"/>
</dbReference>
<dbReference type="PANTHER" id="PTHR12903">
    <property type="entry name" value="MITOCHONDRIAL RIBOSOMAL PROTEIN L24"/>
    <property type="match status" value="1"/>
</dbReference>
<dbReference type="Pfam" id="PF00467">
    <property type="entry name" value="KOW"/>
    <property type="match status" value="1"/>
</dbReference>
<dbReference type="Pfam" id="PF17136">
    <property type="entry name" value="ribosomal_L24"/>
    <property type="match status" value="1"/>
</dbReference>
<dbReference type="SMART" id="SM00739">
    <property type="entry name" value="KOW"/>
    <property type="match status" value="1"/>
</dbReference>
<dbReference type="SUPFAM" id="SSF50104">
    <property type="entry name" value="Translation proteins SH3-like domain"/>
    <property type="match status" value="1"/>
</dbReference>
<dbReference type="PROSITE" id="PS01108">
    <property type="entry name" value="RIBOSOMAL_L24"/>
    <property type="match status" value="1"/>
</dbReference>
<sequence>MAAKIRRDDEVIVLTGKDKGKRGKVKNVLSSGKVIVEGINLVKKHQKPVPALNQPGGIVEKEAAIQVSNVAIFNAATGKADRVGFRFEDGKKVRFFKSNSETIK</sequence>
<protein>
    <recommendedName>
        <fullName evidence="1">Large ribosomal subunit protein uL24</fullName>
    </recommendedName>
    <alternativeName>
        <fullName evidence="2">50S ribosomal protein L24</fullName>
    </alternativeName>
</protein>
<keyword id="KW-0687">Ribonucleoprotein</keyword>
<keyword id="KW-0689">Ribosomal protein</keyword>
<keyword id="KW-0694">RNA-binding</keyword>
<keyword id="KW-0699">rRNA-binding</keyword>
<accession>B1X6G1</accession>
<name>RL24_ECODH</name>